<gene>
    <name type="primary">LY6G6F</name>
    <name type="synonym">C6orf21</name>
    <name type="synonym">G6F</name>
    <name type="synonym">LY6G6D</name>
    <name type="synonym">NG32</name>
</gene>
<accession>Q5SQ64</accession>
<accession>B0UXB7</accession>
<accession>O95869</accession>
<accession>Q7Z5H2</accession>
<accession>Q96QC7</accession>
<accession>Q9NZJ1</accession>
<reference key="1">
    <citation type="journal article" date="2003" name="Biochem. J.">
        <title>Adaptor signalling proteins Grb2 and Grb7 are recruited by human G6f, a novel member of the immunoglobulin superfamily encoded in the MHC.</title>
        <authorList>
            <person name="De Vet E.C.J.M."/>
            <person name="Aguado B."/>
            <person name="Campbell R.D."/>
        </authorList>
    </citation>
    <scope>NUCLEOTIDE SEQUENCE [MRNA] (ISOFORM 1)</scope>
    <scope>FUNCTION</scope>
    <scope>INTERACTION WITH GRB2 AND GRB7</scope>
    <scope>SUBCELLULAR LOCATION</scope>
    <scope>GLYCOSYLATION</scope>
    <scope>PHOSPHORYLATION AT TYR-281</scope>
    <scope>MUTAGENESIS OF TYR-281</scope>
</reference>
<reference key="2">
    <citation type="journal article" date="2003" name="Genome Res.">
        <title>Analysis of the gene-dense major histocompatibility complex class III region and its comparison to mouse.</title>
        <authorList>
            <person name="Xie T."/>
            <person name="Rowen L."/>
            <person name="Aguado B."/>
            <person name="Ahearn M.E."/>
            <person name="Madan A."/>
            <person name="Qin S."/>
            <person name="Campbell R.D."/>
            <person name="Hood L."/>
        </authorList>
    </citation>
    <scope>NUCLEOTIDE SEQUENCE [LARGE SCALE GENOMIC DNA]</scope>
    <scope>VARIANT SER-39</scope>
</reference>
<reference key="3">
    <citation type="submission" date="1999-09" db="EMBL/GenBank/DDBJ databases">
        <title>Homo sapiens 2,229,817bp genomic DNA of 6p21.3 HLA class I region.</title>
        <authorList>
            <person name="Shiina S."/>
            <person name="Tamiya G."/>
            <person name="Oka A."/>
            <person name="Inoko H."/>
        </authorList>
    </citation>
    <scope>NUCLEOTIDE SEQUENCE [LARGE SCALE GENOMIC DNA]</scope>
</reference>
<reference key="4">
    <citation type="submission" date="1999-10" db="EMBL/GenBank/DDBJ databases">
        <title>Identification of MEGT1, a novel megakaryocyte-specific gene.</title>
        <authorList>
            <person name="Mueller R."/>
            <person name="Ziegler B.L."/>
        </authorList>
    </citation>
    <scope>NUCLEOTIDE SEQUENCE [MRNA] (ISOFORM 2)</scope>
</reference>
<reference key="5">
    <citation type="journal article" date="2003" name="Nature">
        <title>The DNA sequence and analysis of human chromosome 6.</title>
        <authorList>
            <person name="Mungall A.J."/>
            <person name="Palmer S.A."/>
            <person name="Sims S.K."/>
            <person name="Edwards C.A."/>
            <person name="Ashurst J.L."/>
            <person name="Wilming L."/>
            <person name="Jones M.C."/>
            <person name="Horton R."/>
            <person name="Hunt S.E."/>
            <person name="Scott C.E."/>
            <person name="Gilbert J.G.R."/>
            <person name="Clamp M.E."/>
            <person name="Bethel G."/>
            <person name="Milne S."/>
            <person name="Ainscough R."/>
            <person name="Almeida J.P."/>
            <person name="Ambrose K.D."/>
            <person name="Andrews T.D."/>
            <person name="Ashwell R.I.S."/>
            <person name="Babbage A.K."/>
            <person name="Bagguley C.L."/>
            <person name="Bailey J."/>
            <person name="Banerjee R."/>
            <person name="Barker D.J."/>
            <person name="Barlow K.F."/>
            <person name="Bates K."/>
            <person name="Beare D.M."/>
            <person name="Beasley H."/>
            <person name="Beasley O."/>
            <person name="Bird C.P."/>
            <person name="Blakey S.E."/>
            <person name="Bray-Allen S."/>
            <person name="Brook J."/>
            <person name="Brown A.J."/>
            <person name="Brown J.Y."/>
            <person name="Burford D.C."/>
            <person name="Burrill W."/>
            <person name="Burton J."/>
            <person name="Carder C."/>
            <person name="Carter N.P."/>
            <person name="Chapman J.C."/>
            <person name="Clark S.Y."/>
            <person name="Clark G."/>
            <person name="Clee C.M."/>
            <person name="Clegg S."/>
            <person name="Cobley V."/>
            <person name="Collier R.E."/>
            <person name="Collins J.E."/>
            <person name="Colman L.K."/>
            <person name="Corby N.R."/>
            <person name="Coville G.J."/>
            <person name="Culley K.M."/>
            <person name="Dhami P."/>
            <person name="Davies J."/>
            <person name="Dunn M."/>
            <person name="Earthrowl M.E."/>
            <person name="Ellington A.E."/>
            <person name="Evans K.A."/>
            <person name="Faulkner L."/>
            <person name="Francis M.D."/>
            <person name="Frankish A."/>
            <person name="Frankland J."/>
            <person name="French L."/>
            <person name="Garner P."/>
            <person name="Garnett J."/>
            <person name="Ghori M.J."/>
            <person name="Gilby L.M."/>
            <person name="Gillson C.J."/>
            <person name="Glithero R.J."/>
            <person name="Grafham D.V."/>
            <person name="Grant M."/>
            <person name="Gribble S."/>
            <person name="Griffiths C."/>
            <person name="Griffiths M.N.D."/>
            <person name="Hall R."/>
            <person name="Halls K.S."/>
            <person name="Hammond S."/>
            <person name="Harley J.L."/>
            <person name="Hart E.A."/>
            <person name="Heath P.D."/>
            <person name="Heathcott R."/>
            <person name="Holmes S.J."/>
            <person name="Howden P.J."/>
            <person name="Howe K.L."/>
            <person name="Howell G.R."/>
            <person name="Huckle E."/>
            <person name="Humphray S.J."/>
            <person name="Humphries M.D."/>
            <person name="Hunt A.R."/>
            <person name="Johnson C.M."/>
            <person name="Joy A.A."/>
            <person name="Kay M."/>
            <person name="Keenan S.J."/>
            <person name="Kimberley A.M."/>
            <person name="King A."/>
            <person name="Laird G.K."/>
            <person name="Langford C."/>
            <person name="Lawlor S."/>
            <person name="Leongamornlert D.A."/>
            <person name="Leversha M."/>
            <person name="Lloyd C.R."/>
            <person name="Lloyd D.M."/>
            <person name="Loveland J.E."/>
            <person name="Lovell J."/>
            <person name="Martin S."/>
            <person name="Mashreghi-Mohammadi M."/>
            <person name="Maslen G.L."/>
            <person name="Matthews L."/>
            <person name="McCann O.T."/>
            <person name="McLaren S.J."/>
            <person name="McLay K."/>
            <person name="McMurray A."/>
            <person name="Moore M.J.F."/>
            <person name="Mullikin J.C."/>
            <person name="Niblett D."/>
            <person name="Nickerson T."/>
            <person name="Novik K.L."/>
            <person name="Oliver K."/>
            <person name="Overton-Larty E.K."/>
            <person name="Parker A."/>
            <person name="Patel R."/>
            <person name="Pearce A.V."/>
            <person name="Peck A.I."/>
            <person name="Phillimore B.J.C.T."/>
            <person name="Phillips S."/>
            <person name="Plumb R.W."/>
            <person name="Porter K.M."/>
            <person name="Ramsey Y."/>
            <person name="Ranby S.A."/>
            <person name="Rice C.M."/>
            <person name="Ross M.T."/>
            <person name="Searle S.M."/>
            <person name="Sehra H.K."/>
            <person name="Sheridan E."/>
            <person name="Skuce C.D."/>
            <person name="Smith S."/>
            <person name="Smith M."/>
            <person name="Spraggon L."/>
            <person name="Squares S.L."/>
            <person name="Steward C.A."/>
            <person name="Sycamore N."/>
            <person name="Tamlyn-Hall G."/>
            <person name="Tester J."/>
            <person name="Theaker A.J."/>
            <person name="Thomas D.W."/>
            <person name="Thorpe A."/>
            <person name="Tracey A."/>
            <person name="Tromans A."/>
            <person name="Tubby B."/>
            <person name="Wall M."/>
            <person name="Wallis J.M."/>
            <person name="West A.P."/>
            <person name="White S.S."/>
            <person name="Whitehead S.L."/>
            <person name="Whittaker H."/>
            <person name="Wild A."/>
            <person name="Willey D.J."/>
            <person name="Wilmer T.E."/>
            <person name="Wood J.M."/>
            <person name="Wray P.W."/>
            <person name="Wyatt J.C."/>
            <person name="Young L."/>
            <person name="Younger R.M."/>
            <person name="Bentley D.R."/>
            <person name="Coulson A."/>
            <person name="Durbin R.M."/>
            <person name="Hubbard T."/>
            <person name="Sulston J.E."/>
            <person name="Dunham I."/>
            <person name="Rogers J."/>
            <person name="Beck S."/>
        </authorList>
    </citation>
    <scope>NUCLEOTIDE SEQUENCE [LARGE SCALE GENOMIC DNA]</scope>
    <scope>VARIANT THR-107</scope>
</reference>
<reference key="6">
    <citation type="submission" date="2005-07" db="EMBL/GenBank/DDBJ databases">
        <authorList>
            <person name="Mural R.J."/>
            <person name="Istrail S."/>
            <person name="Sutton G.G."/>
            <person name="Florea L."/>
            <person name="Halpern A.L."/>
            <person name="Mobarry C.M."/>
            <person name="Lippert R."/>
            <person name="Walenz B."/>
            <person name="Shatkay H."/>
            <person name="Dew I."/>
            <person name="Miller J.R."/>
            <person name="Flanigan M.J."/>
            <person name="Edwards N.J."/>
            <person name="Bolanos R."/>
            <person name="Fasulo D."/>
            <person name="Halldorsson B.V."/>
            <person name="Hannenhalli S."/>
            <person name="Turner R."/>
            <person name="Yooseph S."/>
            <person name="Lu F."/>
            <person name="Nusskern D.R."/>
            <person name="Shue B.C."/>
            <person name="Zheng X.H."/>
            <person name="Zhong F."/>
            <person name="Delcher A.L."/>
            <person name="Huson D.H."/>
            <person name="Kravitz S.A."/>
            <person name="Mouchard L."/>
            <person name="Reinert K."/>
            <person name="Remington K.A."/>
            <person name="Clark A.G."/>
            <person name="Waterman M.S."/>
            <person name="Eichler E.E."/>
            <person name="Adams M.D."/>
            <person name="Hunkapiller M.W."/>
            <person name="Myers E.W."/>
            <person name="Venter J.C."/>
        </authorList>
    </citation>
    <scope>NUCLEOTIDE SEQUENCE [LARGE SCALE GENOMIC DNA]</scope>
</reference>
<reference key="7">
    <citation type="journal article" date="2004" name="Genome Res.">
        <title>The status, quality, and expansion of the NIH full-length cDNA project: the Mammalian Gene Collection (MGC).</title>
        <authorList>
            <consortium name="The MGC Project Team"/>
        </authorList>
    </citation>
    <scope>NUCLEOTIDE SEQUENCE [LARGE SCALE MRNA] (ISOFORM 1)</scope>
</reference>
<reference key="8">
    <citation type="journal article" date="2006" name="Mol. Cell. Proteomics">
        <title>Elucidation of N-glycosylation sites on human platelet proteins: a glycoproteomic approach.</title>
        <authorList>
            <person name="Lewandrowski U."/>
            <person name="Moebius J."/>
            <person name="Walter U."/>
            <person name="Sickmann A."/>
        </authorList>
    </citation>
    <scope>GLYCOSYLATION [LARGE SCALE ANALYSIS] AT ASN-88</scope>
    <source>
        <tissue>Platelet</tissue>
    </source>
</reference>
<protein>
    <recommendedName>
        <fullName>Lymphocyte antigen 6 complex locus protein G6f</fullName>
    </recommendedName>
</protein>
<evidence type="ECO:0000255" key="1"/>
<evidence type="ECO:0000255" key="2">
    <source>
        <dbReference type="PROSITE-ProRule" id="PRU00114"/>
    </source>
</evidence>
<evidence type="ECO:0000269" key="3">
    <source>
    </source>
</evidence>
<evidence type="ECO:0000269" key="4">
    <source>
    </source>
</evidence>
<evidence type="ECO:0000269" key="5">
    <source>
    </source>
</evidence>
<evidence type="ECO:0000269" key="6">
    <source>
    </source>
</evidence>
<evidence type="ECO:0000303" key="7">
    <source ref="4"/>
</evidence>
<evidence type="ECO:0000305" key="8"/>
<comment type="function">
    <text evidence="3">May play a role in the downstream signal transduction pathways involving GRB2 and GRB7.</text>
</comment>
<comment type="subunit">
    <text evidence="3">Homodimer; disulfide-linked. Interacts with GRB2 and GRB7 in a phosphorylation-dependent manner.</text>
</comment>
<comment type="interaction">
    <interactant intactId="EBI-6963742">
        <id>Q5SQ64</id>
    </interactant>
    <interactant intactId="EBI-401755">
        <id>P62993</id>
        <label>GRB2</label>
    </interactant>
    <organismsDiffer>false</organismsDiffer>
    <experiments>3</experiments>
</comment>
<comment type="interaction">
    <interactant intactId="EBI-6963742">
        <id>Q5SQ64</id>
    </interactant>
    <interactant intactId="EBI-970191">
        <id>Q14451</id>
        <label>GRB7</label>
    </interactant>
    <organismsDiffer>false</organismsDiffer>
    <experiments>2</experiments>
</comment>
<comment type="subcellular location">
    <subcellularLocation>
        <location evidence="3">Cell membrane</location>
        <topology evidence="3">Single-pass type I membrane protein</topology>
    </subcellularLocation>
</comment>
<comment type="alternative products">
    <event type="alternative splicing"/>
    <isoform>
        <id>Q5SQ64-1</id>
        <name>1</name>
        <sequence type="displayed"/>
    </isoform>
    <isoform>
        <id>Q5SQ64-2</id>
        <name>2</name>
        <sequence type="described" ref="VSP_055597"/>
    </isoform>
</comment>
<comment type="PTM">
    <text evidence="3 6">N-glycosylated.</text>
</comment>
<comment type="sequence caution" evidence="8">
    <conflict type="erroneous gene model prediction">
        <sequence resource="EMBL-CDS" id="AAD18078"/>
    </conflict>
</comment>
<comment type="sequence caution" evidence="8">
    <conflict type="erroneous gene model prediction">
        <sequence resource="EMBL-CDS" id="BAB63382"/>
    </conflict>
</comment>
<dbReference type="EMBL" id="AJ496460">
    <property type="protein sequence ID" value="CAD42968.1"/>
    <property type="molecule type" value="mRNA"/>
</dbReference>
<dbReference type="EMBL" id="AF129756">
    <property type="protein sequence ID" value="AAD18078.1"/>
    <property type="status" value="ALT_SEQ"/>
    <property type="molecule type" value="Genomic_DNA"/>
</dbReference>
<dbReference type="EMBL" id="BA000025">
    <property type="protein sequence ID" value="BAB63382.1"/>
    <property type="status" value="ALT_SEQ"/>
    <property type="molecule type" value="Genomic_DNA"/>
</dbReference>
<dbReference type="EMBL" id="AF195764">
    <property type="protein sequence ID" value="AAF35181.1"/>
    <property type="molecule type" value="mRNA"/>
</dbReference>
<dbReference type="EMBL" id="AL662899">
    <property type="status" value="NOT_ANNOTATED_CDS"/>
    <property type="molecule type" value="Genomic_DNA"/>
</dbReference>
<dbReference type="EMBL" id="AL670886">
    <property type="status" value="NOT_ANNOTATED_CDS"/>
    <property type="molecule type" value="Genomic_DNA"/>
</dbReference>
<dbReference type="EMBL" id="AL805934">
    <property type="status" value="NOT_ANNOTATED_CDS"/>
    <property type="molecule type" value="Genomic_DNA"/>
</dbReference>
<dbReference type="EMBL" id="BX248244">
    <property type="status" value="NOT_ANNOTATED_CDS"/>
    <property type="molecule type" value="Genomic_DNA"/>
</dbReference>
<dbReference type="EMBL" id="CR354443">
    <property type="status" value="NOT_ANNOTATED_CDS"/>
    <property type="molecule type" value="Genomic_DNA"/>
</dbReference>
<dbReference type="EMBL" id="CR753842">
    <property type="status" value="NOT_ANNOTATED_CDS"/>
    <property type="molecule type" value="Genomic_DNA"/>
</dbReference>
<dbReference type="EMBL" id="CR759787">
    <property type="status" value="NOT_ANNOTATED_CDS"/>
    <property type="molecule type" value="Genomic_DNA"/>
</dbReference>
<dbReference type="EMBL" id="CH471081">
    <property type="protein sequence ID" value="EAX03485.1"/>
    <property type="molecule type" value="Genomic_DNA"/>
</dbReference>
<dbReference type="EMBL" id="CH471081">
    <property type="protein sequence ID" value="EAX03487.1"/>
    <property type="molecule type" value="Genomic_DNA"/>
</dbReference>
<dbReference type="EMBL" id="BC137212">
    <property type="protein sequence ID" value="AAI37213.1"/>
    <property type="molecule type" value="mRNA"/>
</dbReference>
<dbReference type="EMBL" id="BC137213">
    <property type="protein sequence ID" value="AAI37214.1"/>
    <property type="molecule type" value="mRNA"/>
</dbReference>
<dbReference type="CCDS" id="CCDS34403.1">
    <molecule id="Q5SQ64-1"/>
</dbReference>
<dbReference type="RefSeq" id="NP_001003693.1">
    <molecule id="Q5SQ64-1"/>
    <property type="nucleotide sequence ID" value="NM_001003693.3"/>
</dbReference>
<dbReference type="BioGRID" id="129225">
    <property type="interactions" value="14"/>
</dbReference>
<dbReference type="FunCoup" id="Q5SQ64">
    <property type="interactions" value="256"/>
</dbReference>
<dbReference type="IntAct" id="Q5SQ64">
    <property type="interactions" value="5"/>
</dbReference>
<dbReference type="MINT" id="Q5SQ64"/>
<dbReference type="STRING" id="9606.ENSP00000364992"/>
<dbReference type="GlyCosmos" id="Q5SQ64">
    <property type="glycosylation" value="1 site, No reported glycans"/>
</dbReference>
<dbReference type="GlyGen" id="Q5SQ64">
    <property type="glycosylation" value="1 site"/>
</dbReference>
<dbReference type="iPTMnet" id="Q5SQ64"/>
<dbReference type="PhosphoSitePlus" id="Q5SQ64"/>
<dbReference type="BioMuta" id="LY6G6F"/>
<dbReference type="DMDM" id="172045922"/>
<dbReference type="MassIVE" id="Q5SQ64"/>
<dbReference type="PaxDb" id="9606-ENSP00000364992"/>
<dbReference type="PeptideAtlas" id="Q5SQ64"/>
<dbReference type="ProteomicsDB" id="63788">
    <molecule id="Q5SQ64-1"/>
</dbReference>
<dbReference type="ProteomicsDB" id="83413"/>
<dbReference type="Antibodypedia" id="34899">
    <property type="antibodies" value="131 antibodies from 20 providers"/>
</dbReference>
<dbReference type="DNASU" id="259215"/>
<dbReference type="Ensembl" id="ENST00000375832.5">
    <molecule id="Q5SQ64-1"/>
    <property type="protein sequence ID" value="ENSP00000364992.5"/>
    <property type="gene ID" value="ENSG00000204424.10"/>
</dbReference>
<dbReference type="Ensembl" id="ENST00000383420.4">
    <property type="protein sequence ID" value="ENSP00000372912.4"/>
    <property type="gene ID" value="ENSG00000243804.1"/>
</dbReference>
<dbReference type="Ensembl" id="ENST00000442105.2">
    <property type="protein sequence ID" value="ENSP00000404621.2"/>
    <property type="gene ID" value="ENSG00000241822.3"/>
</dbReference>
<dbReference type="Ensembl" id="ENST00000446062.2">
    <molecule id="Q5SQ64-1"/>
    <property type="protein sequence ID" value="ENSP00000404884.2"/>
    <property type="gene ID" value="ENSG00000239741.3"/>
</dbReference>
<dbReference type="Ensembl" id="ENST00000447811.2">
    <molecule id="Q5SQ64-1"/>
    <property type="protein sequence ID" value="ENSP00000409959.2"/>
    <property type="gene ID" value="ENSG00000240008.1"/>
</dbReference>
<dbReference type="Ensembl" id="ENST00000453044.2">
    <molecule id="Q5SQ64-1"/>
    <property type="protein sequence ID" value="ENSP00000389102.2"/>
    <property type="gene ID" value="ENSG00000240957.1"/>
</dbReference>
<dbReference type="Ensembl" id="ENST00000455632.2">
    <molecule id="Q5SQ64-1"/>
    <property type="protein sequence ID" value="ENSP00000407535.2"/>
    <property type="gene ID" value="ENSG00000243003.3"/>
</dbReference>
<dbReference type="GeneID" id="259215"/>
<dbReference type="KEGG" id="hsa:259215"/>
<dbReference type="MANE-Select" id="ENST00000375832.5">
    <property type="protein sequence ID" value="ENSP00000364992.5"/>
    <property type="RefSeq nucleotide sequence ID" value="NM_001003693.3"/>
    <property type="RefSeq protein sequence ID" value="NP_001003693.1"/>
</dbReference>
<dbReference type="UCSC" id="uc003nwa.2">
    <molecule id="Q5SQ64-1"/>
    <property type="organism name" value="human"/>
</dbReference>
<dbReference type="AGR" id="HGNC:13933"/>
<dbReference type="CTD" id="259215"/>
<dbReference type="DisGeNET" id="259215"/>
<dbReference type="GeneCards" id="LY6G6F"/>
<dbReference type="HGNC" id="HGNC:13933">
    <property type="gene designation" value="LY6G6F"/>
</dbReference>
<dbReference type="HPA" id="ENSG00000204424">
    <property type="expression patterns" value="Tissue enhanced (bone marrow, lymphoid tissue, skin)"/>
</dbReference>
<dbReference type="MIM" id="611404">
    <property type="type" value="gene"/>
</dbReference>
<dbReference type="neXtProt" id="NX_Q5SQ64"/>
<dbReference type="OpenTargets" id="ENSG00000204424"/>
<dbReference type="OpenTargets" id="ENSG00000250641"/>
<dbReference type="PharmGKB" id="PA38371"/>
<dbReference type="VEuPathDB" id="HostDB:ENSG00000204424"/>
<dbReference type="eggNOG" id="ENOG502SNF5">
    <property type="taxonomic scope" value="Eukaryota"/>
</dbReference>
<dbReference type="GeneTree" id="ENSGT00390000015960"/>
<dbReference type="HOGENOM" id="CLU_071209_0_0_1"/>
<dbReference type="InParanoid" id="Q5SQ64"/>
<dbReference type="OMA" id="RSCSQKY"/>
<dbReference type="OrthoDB" id="9937043at2759"/>
<dbReference type="PAN-GO" id="Q5SQ64">
    <property type="GO annotations" value="0 GO annotations based on evolutionary models"/>
</dbReference>
<dbReference type="PhylomeDB" id="Q5SQ64"/>
<dbReference type="TreeFam" id="TF337100"/>
<dbReference type="PathwayCommons" id="Q5SQ64"/>
<dbReference type="Reactome" id="R-HSA-114608">
    <property type="pathway name" value="Platelet degranulation"/>
</dbReference>
<dbReference type="SignaLink" id="Q5SQ64"/>
<dbReference type="BioGRID-ORCS" id="259215">
    <property type="hits" value="9 hits in 1124 CRISPR screens"/>
</dbReference>
<dbReference type="GenomeRNAi" id="259215"/>
<dbReference type="Pharos" id="Q5SQ64">
    <property type="development level" value="Tbio"/>
</dbReference>
<dbReference type="PRO" id="PR:Q5SQ64"/>
<dbReference type="Proteomes" id="UP000005640">
    <property type="component" value="Chromosome 6"/>
</dbReference>
<dbReference type="RNAct" id="Q5SQ64">
    <property type="molecule type" value="protein"/>
</dbReference>
<dbReference type="Bgee" id="ENSG00000204424">
    <property type="expression patterns" value="Expressed in monocyte and 29 other cell types or tissues"/>
</dbReference>
<dbReference type="ExpressionAtlas" id="Q5SQ64">
    <property type="expression patterns" value="baseline and differential"/>
</dbReference>
<dbReference type="GO" id="GO:0005886">
    <property type="term" value="C:plasma membrane"/>
    <property type="evidence" value="ECO:0000304"/>
    <property type="project" value="Reactome"/>
</dbReference>
<dbReference type="GO" id="GO:0031092">
    <property type="term" value="C:platelet alpha granule membrane"/>
    <property type="evidence" value="ECO:0000304"/>
    <property type="project" value="Reactome"/>
</dbReference>
<dbReference type="Gene3D" id="2.60.40.10">
    <property type="entry name" value="Immunoglobulins"/>
    <property type="match status" value="1"/>
</dbReference>
<dbReference type="InterPro" id="IPR007110">
    <property type="entry name" value="Ig-like_dom"/>
</dbReference>
<dbReference type="InterPro" id="IPR036179">
    <property type="entry name" value="Ig-like_dom_sf"/>
</dbReference>
<dbReference type="InterPro" id="IPR013783">
    <property type="entry name" value="Ig-like_fold"/>
</dbReference>
<dbReference type="InterPro" id="IPR003599">
    <property type="entry name" value="Ig_sub"/>
</dbReference>
<dbReference type="InterPro" id="IPR013106">
    <property type="entry name" value="Ig_V-set"/>
</dbReference>
<dbReference type="InterPro" id="IPR026524">
    <property type="entry name" value="LY6G6d/LY6G6f"/>
</dbReference>
<dbReference type="PANTHER" id="PTHR32286">
    <property type="entry name" value="LYMPHOCYTE ANTIGEN 6 COMPLEX LOCUS PROTEIN G6F"/>
    <property type="match status" value="1"/>
</dbReference>
<dbReference type="PANTHER" id="PTHR32286:SF10">
    <property type="entry name" value="LYMPHOCYTE ANTIGEN 6 COMPLEX LOCUS PROTEIN G6F"/>
    <property type="match status" value="1"/>
</dbReference>
<dbReference type="Pfam" id="PF07686">
    <property type="entry name" value="V-set"/>
    <property type="match status" value="1"/>
</dbReference>
<dbReference type="SMART" id="SM00409">
    <property type="entry name" value="IG"/>
    <property type="match status" value="1"/>
</dbReference>
<dbReference type="SUPFAM" id="SSF48726">
    <property type="entry name" value="Immunoglobulin"/>
    <property type="match status" value="1"/>
</dbReference>
<dbReference type="PROSITE" id="PS50835">
    <property type="entry name" value="IG_LIKE"/>
    <property type="match status" value="1"/>
</dbReference>
<name>LY66F_HUMAN</name>
<proteinExistence type="evidence at protein level"/>
<sequence length="297" mass="32465">MAVLFLLLFLCGTPQAADNMQAIYVALGEAVELPCPSPPTLHGDEHLSWFCSPAAGSFTTLVAQVQVGRPAPDPGKPGRESRLRLLGNYSLWLEGSKEEDAGRYWCAVLGQHHNYQNWRVYDVLVLKGSQLSARAADGSPCNVLLCSVVPSRRMDSVTWQEGKGPVRGRVQSFWGSEAALLLVCPGEGLSEPRSRRPRIIRCLMTHNKGVSFSLAASIDASPALCAPSTGWDMPWILMLLLTMGQGVVILALSIVLWRQRVRGAPGRDASIPQFKPEIQVYENIHLARLGPPAHKPR</sequence>
<feature type="signal peptide" evidence="1">
    <location>
        <begin position="1"/>
        <end position="16"/>
    </location>
</feature>
<feature type="chain" id="PRO_0000318923" description="Lymphocyte antigen 6 complex locus protein G6f">
    <location>
        <begin position="17"/>
        <end position="297"/>
    </location>
</feature>
<feature type="topological domain" description="Extracellular" evidence="1">
    <location>
        <begin position="17"/>
        <end position="235"/>
    </location>
</feature>
<feature type="transmembrane region" description="Helical" evidence="1">
    <location>
        <begin position="236"/>
        <end position="256"/>
    </location>
</feature>
<feature type="topological domain" description="Cytoplasmic" evidence="1">
    <location>
        <begin position="257"/>
        <end position="297"/>
    </location>
</feature>
<feature type="domain" description="Ig-like V-type">
    <location>
        <begin position="17"/>
        <end position="122"/>
    </location>
</feature>
<feature type="modified residue" description="Phosphotyrosine" evidence="3">
    <location>
        <position position="281"/>
    </location>
</feature>
<feature type="glycosylation site" description="N-linked (GlcNAc...) asparagine" evidence="6">
    <location>
        <position position="88"/>
    </location>
</feature>
<feature type="disulfide bond" evidence="2">
    <location>
        <begin position="35"/>
        <end position="106"/>
    </location>
</feature>
<feature type="splice variant" id="VSP_055597" description="In isoform 2." evidence="7">
    <original>DASIPQFKPEIQVYENIHLARLGPPAHKPR</original>
    <variation>GNRMRCYNCGGSPSSSCKEAVTTCGEGRPQPGLEQIKLPGNPPVTLIHQHPACVAAHHCNQVETESVGDVTYPAHRDCYLGDLCNSAVASHVAPAGILAAAATALTCLLPGLWSG</variation>
    <location>
        <begin position="268"/>
        <end position="297"/>
    </location>
</feature>
<feature type="sequence variant" id="VAR_038908" description="In dbSNP:rs17200983.">
    <original>P</original>
    <variation>Q</variation>
    <location>
        <position position="34"/>
    </location>
</feature>
<feature type="sequence variant" id="VAR_038909" description="In dbSNP:rs805295." evidence="5">
    <original>P</original>
    <variation>S</variation>
    <location>
        <position position="39"/>
    </location>
</feature>
<feature type="sequence variant" id="VAR_038910" description="In dbSNP:rs9267547." evidence="4">
    <original>A</original>
    <variation>T</variation>
    <location>
        <position position="107"/>
    </location>
</feature>
<feature type="sequence variant" id="VAR_038911" description="In dbSNP:rs2242653.">
    <original>R</original>
    <variation>K</variation>
    <location>
        <position position="167"/>
    </location>
</feature>
<feature type="mutagenesis site" description="No phosphorylation. No interaction with GRB2 and GRB7. No phosphorylation increase of p42/44 MAP kinase." evidence="3">
    <original>Y</original>
    <variation>F</variation>
    <location>
        <position position="281"/>
    </location>
</feature>
<keyword id="KW-0025">Alternative splicing</keyword>
<keyword id="KW-1003">Cell membrane</keyword>
<keyword id="KW-1015">Disulfide bond</keyword>
<keyword id="KW-0325">Glycoprotein</keyword>
<keyword id="KW-0393">Immunoglobulin domain</keyword>
<keyword id="KW-0472">Membrane</keyword>
<keyword id="KW-0597">Phosphoprotein</keyword>
<keyword id="KW-1267">Proteomics identification</keyword>
<keyword id="KW-1185">Reference proteome</keyword>
<keyword id="KW-0732">Signal</keyword>
<keyword id="KW-0812">Transmembrane</keyword>
<keyword id="KW-1133">Transmembrane helix</keyword>
<organism>
    <name type="scientific">Homo sapiens</name>
    <name type="common">Human</name>
    <dbReference type="NCBI Taxonomy" id="9606"/>
    <lineage>
        <taxon>Eukaryota</taxon>
        <taxon>Metazoa</taxon>
        <taxon>Chordata</taxon>
        <taxon>Craniata</taxon>
        <taxon>Vertebrata</taxon>
        <taxon>Euteleostomi</taxon>
        <taxon>Mammalia</taxon>
        <taxon>Eutheria</taxon>
        <taxon>Euarchontoglires</taxon>
        <taxon>Primates</taxon>
        <taxon>Haplorrhini</taxon>
        <taxon>Catarrhini</taxon>
        <taxon>Hominidae</taxon>
        <taxon>Homo</taxon>
    </lineage>
</organism>